<comment type="similarity">
    <text evidence="1">Belongs to the bacterial ribosomal protein bL33 family.</text>
</comment>
<reference key="1">
    <citation type="book" date="2006" name="Gram positive pathogens, 2nd edition">
        <title>The Staphylococcus aureus NCTC 8325 genome.</title>
        <editorList>
            <person name="Fischetti V."/>
            <person name="Novick R."/>
            <person name="Ferretti J."/>
            <person name="Portnoy D."/>
            <person name="Rood J."/>
        </editorList>
        <authorList>
            <person name="Gillaspy A.F."/>
            <person name="Worrell V."/>
            <person name="Orvis J."/>
            <person name="Roe B.A."/>
            <person name="Dyer D.W."/>
            <person name="Iandolo J.J."/>
        </authorList>
    </citation>
    <scope>NUCLEOTIDE SEQUENCE [LARGE SCALE GENOMIC DNA]</scope>
    <source>
        <strain>NCTC 8325 / PS 47</strain>
    </source>
</reference>
<sequence>MRVNVTLACTECGDRNYITTKNKRNNPERIEMKKYCPRLNKYTLHRETK</sequence>
<evidence type="ECO:0000255" key="1">
    <source>
        <dbReference type="HAMAP-Rule" id="MF_00294"/>
    </source>
</evidence>
<evidence type="ECO:0007829" key="2">
    <source>
        <dbReference type="PDB" id="7ASM"/>
    </source>
</evidence>
<organism>
    <name type="scientific">Staphylococcus aureus (strain NCTC 8325 / PS 47)</name>
    <dbReference type="NCBI Taxonomy" id="93061"/>
    <lineage>
        <taxon>Bacteria</taxon>
        <taxon>Bacillati</taxon>
        <taxon>Bacillota</taxon>
        <taxon>Bacilli</taxon>
        <taxon>Bacillales</taxon>
        <taxon>Staphylococcaceae</taxon>
        <taxon>Staphylococcus</taxon>
    </lineage>
</organism>
<feature type="chain" id="PRO_0000356690" description="Large ribosomal subunit protein bL33A">
    <location>
        <begin position="1"/>
        <end position="49"/>
    </location>
</feature>
<feature type="strand" evidence="2">
    <location>
        <begin position="3"/>
        <end position="9"/>
    </location>
</feature>
<feature type="turn" evidence="2">
    <location>
        <begin position="10"/>
        <end position="12"/>
    </location>
</feature>
<feature type="strand" evidence="2">
    <location>
        <begin position="17"/>
        <end position="21"/>
    </location>
</feature>
<feature type="turn" evidence="2">
    <location>
        <begin position="23"/>
        <end position="25"/>
    </location>
</feature>
<feature type="strand" evidence="2">
    <location>
        <begin position="31"/>
        <end position="35"/>
    </location>
</feature>
<feature type="turn" evidence="2">
    <location>
        <begin position="37"/>
        <end position="39"/>
    </location>
</feature>
<feature type="strand" evidence="2">
    <location>
        <begin position="40"/>
        <end position="47"/>
    </location>
</feature>
<gene>
    <name evidence="1" type="primary">rpmG1</name>
    <name type="ordered locus">SAOUHSC_01328</name>
</gene>
<name>RL331_STAA8</name>
<keyword id="KW-0002">3D-structure</keyword>
<keyword id="KW-1185">Reference proteome</keyword>
<keyword id="KW-0687">Ribonucleoprotein</keyword>
<keyword id="KW-0689">Ribosomal protein</keyword>
<proteinExistence type="evidence at protein level"/>
<protein>
    <recommendedName>
        <fullName evidence="1">Large ribosomal subunit protein bL33A</fullName>
    </recommendedName>
    <alternativeName>
        <fullName evidence="1">50S ribosomal protein L33 1</fullName>
    </alternativeName>
</protein>
<dbReference type="EMBL" id="CP000253">
    <property type="protein sequence ID" value="ABD30426.1"/>
    <property type="molecule type" value="Genomic_DNA"/>
</dbReference>
<dbReference type="PDB" id="5TCU">
    <property type="method" value="EM"/>
    <property type="resolution" value="3.90 A"/>
    <property type="chains" value="LS=2-48"/>
</dbReference>
<dbReference type="PDB" id="6HMA">
    <property type="method" value="EM"/>
    <property type="resolution" value="2.65 A"/>
    <property type="chains" value="1=2-48"/>
</dbReference>
<dbReference type="PDB" id="7ASM">
    <property type="method" value="EM"/>
    <property type="resolution" value="2.48 A"/>
    <property type="chains" value="1=2-48"/>
</dbReference>
<dbReference type="PDB" id="7ASN">
    <property type="method" value="EM"/>
    <property type="resolution" value="2.73 A"/>
    <property type="chains" value="1=2-48"/>
</dbReference>
<dbReference type="PDB" id="8P2F">
    <property type="method" value="EM"/>
    <property type="resolution" value="2.44 A"/>
    <property type="chains" value="6=1-49"/>
</dbReference>
<dbReference type="PDB" id="8P2G">
    <property type="method" value="EM"/>
    <property type="resolution" value="2.02 A"/>
    <property type="chains" value="6=1-49"/>
</dbReference>
<dbReference type="PDB" id="8P2H">
    <property type="method" value="EM"/>
    <property type="resolution" value="2.49 A"/>
    <property type="chains" value="6=1-49"/>
</dbReference>
<dbReference type="PDBsum" id="5TCU"/>
<dbReference type="PDBsum" id="6HMA"/>
<dbReference type="PDBsum" id="7ASM"/>
<dbReference type="PDBsum" id="7ASN"/>
<dbReference type="PDBsum" id="8P2F"/>
<dbReference type="PDBsum" id="8P2G"/>
<dbReference type="PDBsum" id="8P2H"/>
<dbReference type="EMDB" id="EMD-17363"/>
<dbReference type="EMDB" id="EMD-17364"/>
<dbReference type="EMDB" id="EMD-17365"/>
<dbReference type="EMDB" id="EMD-8402"/>
<dbReference type="SMR" id="Q2FYU6"/>
<dbReference type="STRING" id="93061.SAOUHSC_01328"/>
<dbReference type="PaxDb" id="1280-SAXN108_1352"/>
<dbReference type="KEGG" id="sao:SAOUHSC_01328"/>
<dbReference type="PATRIC" id="fig|93061.5.peg.1214"/>
<dbReference type="eggNOG" id="COG0267">
    <property type="taxonomic scope" value="Bacteria"/>
</dbReference>
<dbReference type="HOGENOM" id="CLU_190949_0_2_9"/>
<dbReference type="OrthoDB" id="197660at2"/>
<dbReference type="PRO" id="PR:Q2FYU6"/>
<dbReference type="Proteomes" id="UP000008816">
    <property type="component" value="Chromosome"/>
</dbReference>
<dbReference type="GO" id="GO:0005737">
    <property type="term" value="C:cytoplasm"/>
    <property type="evidence" value="ECO:0007669"/>
    <property type="project" value="UniProtKB-ARBA"/>
</dbReference>
<dbReference type="GO" id="GO:1990904">
    <property type="term" value="C:ribonucleoprotein complex"/>
    <property type="evidence" value="ECO:0007669"/>
    <property type="project" value="UniProtKB-KW"/>
</dbReference>
<dbReference type="GO" id="GO:0005840">
    <property type="term" value="C:ribosome"/>
    <property type="evidence" value="ECO:0007669"/>
    <property type="project" value="UniProtKB-KW"/>
</dbReference>
<dbReference type="GO" id="GO:0003735">
    <property type="term" value="F:structural constituent of ribosome"/>
    <property type="evidence" value="ECO:0007669"/>
    <property type="project" value="InterPro"/>
</dbReference>
<dbReference type="GO" id="GO:0006412">
    <property type="term" value="P:translation"/>
    <property type="evidence" value="ECO:0007669"/>
    <property type="project" value="UniProtKB-UniRule"/>
</dbReference>
<dbReference type="Gene3D" id="2.20.28.120">
    <property type="entry name" value="Ribosomal protein L33"/>
    <property type="match status" value="1"/>
</dbReference>
<dbReference type="HAMAP" id="MF_00294">
    <property type="entry name" value="Ribosomal_bL33"/>
    <property type="match status" value="1"/>
</dbReference>
<dbReference type="InterPro" id="IPR001705">
    <property type="entry name" value="Ribosomal_bL33"/>
</dbReference>
<dbReference type="InterPro" id="IPR018264">
    <property type="entry name" value="Ribosomal_bL33_CS"/>
</dbReference>
<dbReference type="InterPro" id="IPR038584">
    <property type="entry name" value="Ribosomal_bL33_sf"/>
</dbReference>
<dbReference type="InterPro" id="IPR011332">
    <property type="entry name" value="Ribosomal_zn-bd"/>
</dbReference>
<dbReference type="NCBIfam" id="NF001764">
    <property type="entry name" value="PRK00504.1"/>
    <property type="match status" value="1"/>
</dbReference>
<dbReference type="NCBIfam" id="NF001860">
    <property type="entry name" value="PRK00595.1"/>
    <property type="match status" value="1"/>
</dbReference>
<dbReference type="NCBIfam" id="TIGR01023">
    <property type="entry name" value="rpmG_bact"/>
    <property type="match status" value="1"/>
</dbReference>
<dbReference type="PANTHER" id="PTHR43168">
    <property type="entry name" value="50S RIBOSOMAL PROTEIN L33, CHLOROPLASTIC"/>
    <property type="match status" value="1"/>
</dbReference>
<dbReference type="PANTHER" id="PTHR43168:SF2">
    <property type="entry name" value="LARGE RIBOSOMAL SUBUNIT PROTEIN BL33C"/>
    <property type="match status" value="1"/>
</dbReference>
<dbReference type="Pfam" id="PF00471">
    <property type="entry name" value="Ribosomal_L33"/>
    <property type="match status" value="1"/>
</dbReference>
<dbReference type="SUPFAM" id="SSF57829">
    <property type="entry name" value="Zn-binding ribosomal proteins"/>
    <property type="match status" value="1"/>
</dbReference>
<dbReference type="PROSITE" id="PS00582">
    <property type="entry name" value="RIBOSOMAL_L33"/>
    <property type="match status" value="1"/>
</dbReference>
<accession>Q2FYU6</accession>